<dbReference type="EMBL" id="AP009484">
    <property type="protein sequence ID" value="BAH17557.1"/>
    <property type="molecule type" value="Genomic_DNA"/>
</dbReference>
<dbReference type="RefSeq" id="WP_012656757.1">
    <property type="nucleotide sequence ID" value="NC_011999.1"/>
</dbReference>
<dbReference type="SMR" id="B9EBE6"/>
<dbReference type="STRING" id="458233.MCCL_0850"/>
<dbReference type="GeneID" id="61129241"/>
<dbReference type="KEGG" id="mcl:MCCL_0850"/>
<dbReference type="eggNOG" id="COG0779">
    <property type="taxonomic scope" value="Bacteria"/>
</dbReference>
<dbReference type="HOGENOM" id="CLU_070525_2_0_9"/>
<dbReference type="OrthoDB" id="9805006at2"/>
<dbReference type="Proteomes" id="UP000001383">
    <property type="component" value="Chromosome"/>
</dbReference>
<dbReference type="GO" id="GO:0005829">
    <property type="term" value="C:cytosol"/>
    <property type="evidence" value="ECO:0007669"/>
    <property type="project" value="TreeGrafter"/>
</dbReference>
<dbReference type="GO" id="GO:0000028">
    <property type="term" value="P:ribosomal small subunit assembly"/>
    <property type="evidence" value="ECO:0007669"/>
    <property type="project" value="TreeGrafter"/>
</dbReference>
<dbReference type="GO" id="GO:0006412">
    <property type="term" value="P:translation"/>
    <property type="evidence" value="ECO:0007669"/>
    <property type="project" value="TreeGrafter"/>
</dbReference>
<dbReference type="CDD" id="cd01734">
    <property type="entry name" value="YlxS_C"/>
    <property type="match status" value="1"/>
</dbReference>
<dbReference type="FunFam" id="3.30.300.70:FF:000001">
    <property type="entry name" value="Ribosome maturation factor RimP"/>
    <property type="match status" value="1"/>
</dbReference>
<dbReference type="Gene3D" id="2.30.30.180">
    <property type="entry name" value="Ribosome maturation factor RimP, C-terminal domain"/>
    <property type="match status" value="1"/>
</dbReference>
<dbReference type="Gene3D" id="3.30.300.70">
    <property type="entry name" value="RimP-like superfamily, N-terminal"/>
    <property type="match status" value="1"/>
</dbReference>
<dbReference type="HAMAP" id="MF_01077">
    <property type="entry name" value="RimP"/>
    <property type="match status" value="1"/>
</dbReference>
<dbReference type="InterPro" id="IPR003728">
    <property type="entry name" value="Ribosome_maturation_RimP"/>
</dbReference>
<dbReference type="InterPro" id="IPR028998">
    <property type="entry name" value="RimP_C"/>
</dbReference>
<dbReference type="InterPro" id="IPR036847">
    <property type="entry name" value="RimP_C_sf"/>
</dbReference>
<dbReference type="InterPro" id="IPR028989">
    <property type="entry name" value="RimP_N"/>
</dbReference>
<dbReference type="InterPro" id="IPR035956">
    <property type="entry name" value="RimP_N_sf"/>
</dbReference>
<dbReference type="NCBIfam" id="NF000928">
    <property type="entry name" value="PRK00092.1-2"/>
    <property type="match status" value="1"/>
</dbReference>
<dbReference type="PANTHER" id="PTHR33867">
    <property type="entry name" value="RIBOSOME MATURATION FACTOR RIMP"/>
    <property type="match status" value="1"/>
</dbReference>
<dbReference type="PANTHER" id="PTHR33867:SF1">
    <property type="entry name" value="RIBOSOME MATURATION FACTOR RIMP"/>
    <property type="match status" value="1"/>
</dbReference>
<dbReference type="Pfam" id="PF17384">
    <property type="entry name" value="DUF150_C"/>
    <property type="match status" value="1"/>
</dbReference>
<dbReference type="Pfam" id="PF02576">
    <property type="entry name" value="RimP_N"/>
    <property type="match status" value="1"/>
</dbReference>
<dbReference type="SUPFAM" id="SSF74942">
    <property type="entry name" value="YhbC-like, C-terminal domain"/>
    <property type="match status" value="1"/>
</dbReference>
<dbReference type="SUPFAM" id="SSF75420">
    <property type="entry name" value="YhbC-like, N-terminal domain"/>
    <property type="match status" value="1"/>
</dbReference>
<keyword id="KW-0963">Cytoplasm</keyword>
<keyword id="KW-1185">Reference proteome</keyword>
<keyword id="KW-0690">Ribosome biogenesis</keyword>
<gene>
    <name evidence="1" type="primary">rimP</name>
    <name type="ordered locus">MCCL_0850</name>
</gene>
<organism>
    <name type="scientific">Macrococcus caseolyticus (strain JCSC5402)</name>
    <name type="common">Macrococcoides caseolyticum</name>
    <dbReference type="NCBI Taxonomy" id="458233"/>
    <lineage>
        <taxon>Bacteria</taxon>
        <taxon>Bacillati</taxon>
        <taxon>Bacillota</taxon>
        <taxon>Bacilli</taxon>
        <taxon>Bacillales</taxon>
        <taxon>Staphylococcaceae</taxon>
        <taxon>Macrococcoides</taxon>
    </lineage>
</organism>
<proteinExistence type="inferred from homology"/>
<protein>
    <recommendedName>
        <fullName evidence="1">Ribosome maturation factor RimP</fullName>
    </recommendedName>
</protein>
<sequence length="155" mass="17503">MSKVTERVEAICQPVVESLGFELVDVEYVKEGPDYYLRIAIDKPGGIDISDCALASEKISEVMDKEDPITEAYFLDVSSPGAERPLKKEKDYENAIGKHVYVKLYEPVEGDKEWIGELKEVSKDTITLSAKIKTRTKVIEIDRKRIAKIRLAVIL</sequence>
<feature type="chain" id="PRO_1000149797" description="Ribosome maturation factor RimP">
    <location>
        <begin position="1"/>
        <end position="155"/>
    </location>
</feature>
<name>RIMP_MACCJ</name>
<accession>B9EBE6</accession>
<comment type="function">
    <text evidence="1">Required for maturation of 30S ribosomal subunits.</text>
</comment>
<comment type="subcellular location">
    <subcellularLocation>
        <location evidence="1">Cytoplasm</location>
    </subcellularLocation>
</comment>
<comment type="similarity">
    <text evidence="1">Belongs to the RimP family.</text>
</comment>
<reference key="1">
    <citation type="journal article" date="2009" name="J. Bacteriol.">
        <title>Complete genome sequence of Macrococcus caseolyticus strain JCSCS5402, reflecting the ancestral genome of the human-pathogenic staphylococci.</title>
        <authorList>
            <person name="Baba T."/>
            <person name="Kuwahara-Arai K."/>
            <person name="Uchiyama I."/>
            <person name="Takeuchi F."/>
            <person name="Ito T."/>
            <person name="Hiramatsu K."/>
        </authorList>
    </citation>
    <scope>NUCLEOTIDE SEQUENCE [LARGE SCALE GENOMIC DNA]</scope>
    <source>
        <strain>JCSC5402</strain>
    </source>
</reference>
<evidence type="ECO:0000255" key="1">
    <source>
        <dbReference type="HAMAP-Rule" id="MF_01077"/>
    </source>
</evidence>